<reference key="1">
    <citation type="journal article" date="2007" name="Nat. Genet.">
        <title>Genomic analysis of Bartonella identifies type IV secretion systems as host adaptability factors.</title>
        <authorList>
            <person name="Saenz H.L."/>
            <person name="Engel P."/>
            <person name="Stoeckli M.C."/>
            <person name="Lanz C."/>
            <person name="Raddatz G."/>
            <person name="Vayssier-Taussat M."/>
            <person name="Birtles R."/>
            <person name="Schuster S.C."/>
            <person name="Dehio C."/>
        </authorList>
    </citation>
    <scope>NUCLEOTIDE SEQUENCE [LARGE SCALE GENOMIC DNA]</scope>
    <source>
        <strain>CIP 105476 / IBS 506</strain>
    </source>
</reference>
<accession>A9IW20</accession>
<feature type="chain" id="PRO_1000086091" description="Small ribosomal subunit protein uS3">
    <location>
        <begin position="1"/>
        <end position="236"/>
    </location>
</feature>
<feature type="domain" description="KH type-2" evidence="1">
    <location>
        <begin position="39"/>
        <end position="107"/>
    </location>
</feature>
<feature type="region of interest" description="Disordered" evidence="2">
    <location>
        <begin position="214"/>
        <end position="236"/>
    </location>
</feature>
<dbReference type="EMBL" id="AM260525">
    <property type="protein sequence ID" value="CAK01858.1"/>
    <property type="molecule type" value="Genomic_DNA"/>
</dbReference>
<dbReference type="RefSeq" id="WP_012231993.1">
    <property type="nucleotide sequence ID" value="NC_010161.1"/>
</dbReference>
<dbReference type="SMR" id="A9IW20"/>
<dbReference type="KEGG" id="btr:BT_1512"/>
<dbReference type="eggNOG" id="COG0092">
    <property type="taxonomic scope" value="Bacteria"/>
</dbReference>
<dbReference type="HOGENOM" id="CLU_058591_0_2_5"/>
<dbReference type="Proteomes" id="UP000001592">
    <property type="component" value="Chromosome"/>
</dbReference>
<dbReference type="GO" id="GO:0022627">
    <property type="term" value="C:cytosolic small ribosomal subunit"/>
    <property type="evidence" value="ECO:0007669"/>
    <property type="project" value="TreeGrafter"/>
</dbReference>
<dbReference type="GO" id="GO:0003729">
    <property type="term" value="F:mRNA binding"/>
    <property type="evidence" value="ECO:0007669"/>
    <property type="project" value="UniProtKB-UniRule"/>
</dbReference>
<dbReference type="GO" id="GO:0019843">
    <property type="term" value="F:rRNA binding"/>
    <property type="evidence" value="ECO:0007669"/>
    <property type="project" value="UniProtKB-UniRule"/>
</dbReference>
<dbReference type="GO" id="GO:0003735">
    <property type="term" value="F:structural constituent of ribosome"/>
    <property type="evidence" value="ECO:0007669"/>
    <property type="project" value="InterPro"/>
</dbReference>
<dbReference type="GO" id="GO:0006412">
    <property type="term" value="P:translation"/>
    <property type="evidence" value="ECO:0007669"/>
    <property type="project" value="UniProtKB-UniRule"/>
</dbReference>
<dbReference type="CDD" id="cd02412">
    <property type="entry name" value="KH-II_30S_S3"/>
    <property type="match status" value="1"/>
</dbReference>
<dbReference type="FunFam" id="3.30.1140.32:FF:000002">
    <property type="entry name" value="30S ribosomal protein S3"/>
    <property type="match status" value="1"/>
</dbReference>
<dbReference type="FunFam" id="3.30.300.20:FF:000001">
    <property type="entry name" value="30S ribosomal protein S3"/>
    <property type="match status" value="1"/>
</dbReference>
<dbReference type="Gene3D" id="3.30.300.20">
    <property type="match status" value="1"/>
</dbReference>
<dbReference type="Gene3D" id="3.30.1140.32">
    <property type="entry name" value="Ribosomal protein S3, C-terminal domain"/>
    <property type="match status" value="1"/>
</dbReference>
<dbReference type="HAMAP" id="MF_01309_B">
    <property type="entry name" value="Ribosomal_uS3_B"/>
    <property type="match status" value="1"/>
</dbReference>
<dbReference type="InterPro" id="IPR004087">
    <property type="entry name" value="KH_dom"/>
</dbReference>
<dbReference type="InterPro" id="IPR015946">
    <property type="entry name" value="KH_dom-like_a/b"/>
</dbReference>
<dbReference type="InterPro" id="IPR004044">
    <property type="entry name" value="KH_dom_type_2"/>
</dbReference>
<dbReference type="InterPro" id="IPR009019">
    <property type="entry name" value="KH_sf_prok-type"/>
</dbReference>
<dbReference type="InterPro" id="IPR036419">
    <property type="entry name" value="Ribosomal_S3_C_sf"/>
</dbReference>
<dbReference type="InterPro" id="IPR005704">
    <property type="entry name" value="Ribosomal_uS3_bac-typ"/>
</dbReference>
<dbReference type="InterPro" id="IPR001351">
    <property type="entry name" value="Ribosomal_uS3_C"/>
</dbReference>
<dbReference type="InterPro" id="IPR018280">
    <property type="entry name" value="Ribosomal_uS3_CS"/>
</dbReference>
<dbReference type="NCBIfam" id="TIGR01009">
    <property type="entry name" value="rpsC_bact"/>
    <property type="match status" value="1"/>
</dbReference>
<dbReference type="PANTHER" id="PTHR11760">
    <property type="entry name" value="30S/40S RIBOSOMAL PROTEIN S3"/>
    <property type="match status" value="1"/>
</dbReference>
<dbReference type="PANTHER" id="PTHR11760:SF19">
    <property type="entry name" value="SMALL RIBOSOMAL SUBUNIT PROTEIN US3C"/>
    <property type="match status" value="1"/>
</dbReference>
<dbReference type="Pfam" id="PF07650">
    <property type="entry name" value="KH_2"/>
    <property type="match status" value="1"/>
</dbReference>
<dbReference type="Pfam" id="PF00189">
    <property type="entry name" value="Ribosomal_S3_C"/>
    <property type="match status" value="1"/>
</dbReference>
<dbReference type="SMART" id="SM00322">
    <property type="entry name" value="KH"/>
    <property type="match status" value="1"/>
</dbReference>
<dbReference type="SUPFAM" id="SSF54814">
    <property type="entry name" value="Prokaryotic type KH domain (KH-domain type II)"/>
    <property type="match status" value="1"/>
</dbReference>
<dbReference type="SUPFAM" id="SSF54821">
    <property type="entry name" value="Ribosomal protein S3 C-terminal domain"/>
    <property type="match status" value="1"/>
</dbReference>
<dbReference type="PROSITE" id="PS50823">
    <property type="entry name" value="KH_TYPE_2"/>
    <property type="match status" value="1"/>
</dbReference>
<dbReference type="PROSITE" id="PS00548">
    <property type="entry name" value="RIBOSOMAL_S3"/>
    <property type="match status" value="1"/>
</dbReference>
<comment type="function">
    <text evidence="1">Binds the lower part of the 30S subunit head. Binds mRNA in the 70S ribosome, positioning it for translation.</text>
</comment>
<comment type="subunit">
    <text evidence="1">Part of the 30S ribosomal subunit. Forms a tight complex with proteins S10 and S14.</text>
</comment>
<comment type="similarity">
    <text evidence="1">Belongs to the universal ribosomal protein uS3 family.</text>
</comment>
<sequence>MGQKINPIGLRLGVNRTWDSRWYADSGEYGRLLHEDLRIRSYVLEELRQAAISKVVIERPHKKCRVTIHSARPGLIIGKKGADIEKLRRKLSEMTNAETSLNIVEIRKPEIDATIIAQSIAQQLERRVAFRRAMKRAVQSAMRLGAEGIRINCSGRLGGAEIARMEWYREGRVPLHTLRSDVDYGTAEAKTAYGICGIKVWVFKGEILEHDPMASERRATEADQSGSSSNRRRENA</sequence>
<proteinExistence type="inferred from homology"/>
<name>RS3_BART1</name>
<keyword id="KW-0687">Ribonucleoprotein</keyword>
<keyword id="KW-0689">Ribosomal protein</keyword>
<keyword id="KW-0694">RNA-binding</keyword>
<keyword id="KW-0699">rRNA-binding</keyword>
<evidence type="ECO:0000255" key="1">
    <source>
        <dbReference type="HAMAP-Rule" id="MF_01309"/>
    </source>
</evidence>
<evidence type="ECO:0000256" key="2">
    <source>
        <dbReference type="SAM" id="MobiDB-lite"/>
    </source>
</evidence>
<evidence type="ECO:0000305" key="3"/>
<gene>
    <name evidence="1" type="primary">rpsC</name>
    <name type="ordered locus">BT_1512</name>
</gene>
<protein>
    <recommendedName>
        <fullName evidence="1">Small ribosomal subunit protein uS3</fullName>
    </recommendedName>
    <alternativeName>
        <fullName evidence="3">30S ribosomal protein S3</fullName>
    </alternativeName>
</protein>
<organism>
    <name type="scientific">Bartonella tribocorum (strain CIP 105476 / IBS 506)</name>
    <dbReference type="NCBI Taxonomy" id="382640"/>
    <lineage>
        <taxon>Bacteria</taxon>
        <taxon>Pseudomonadati</taxon>
        <taxon>Pseudomonadota</taxon>
        <taxon>Alphaproteobacteria</taxon>
        <taxon>Hyphomicrobiales</taxon>
        <taxon>Bartonellaceae</taxon>
        <taxon>Bartonella</taxon>
    </lineage>
</organism>